<organism>
    <name type="scientific">Mycobacterium tuberculosis (strain ATCC 25618 / H37Rv)</name>
    <dbReference type="NCBI Taxonomy" id="83332"/>
    <lineage>
        <taxon>Bacteria</taxon>
        <taxon>Bacillati</taxon>
        <taxon>Actinomycetota</taxon>
        <taxon>Actinomycetes</taxon>
        <taxon>Mycobacteriales</taxon>
        <taxon>Mycobacteriaceae</taxon>
        <taxon>Mycobacterium</taxon>
        <taxon>Mycobacterium tuberculosis complex</taxon>
    </lineage>
</organism>
<proteinExistence type="evidence at protein level"/>
<keyword id="KW-0012">Acyltransferase</keyword>
<keyword id="KW-0997">Cell inner membrane</keyword>
<keyword id="KW-1003">Cell membrane</keyword>
<keyword id="KW-0444">Lipid biosynthesis</keyword>
<keyword id="KW-0443">Lipid metabolism</keyword>
<keyword id="KW-0472">Membrane</keyword>
<keyword id="KW-0594">Phospholipid biosynthesis</keyword>
<keyword id="KW-1208">Phospholipid metabolism</keyword>
<keyword id="KW-1185">Reference proteome</keyword>
<keyword id="KW-0808">Transferase</keyword>
<keyword id="KW-0843">Virulence</keyword>
<sequence>MIAGLKGLKLPKDPRSSVTRTATDWAYAAGWMAVRALPEFAVRNAFDTGARYFARHGGPEQLRKNLARVLGVPPAAVPDPLMCASLESYGRYWREVFRLPTINHRKLARQLDRVIGGLDHLDAALAAGLGAVLALPHSGNWDMAGMWLVQRHGTFTTVAERLKPESLYQRFIDYRESLGFEVLPLSGGERPPFEVLSERLRNNRVVCLMAERDLTRTGVEVDFFGEPTRMPVGPAKLAVETGAALLPTHCWFEGRGWGFQVYPALDCTSGDVAAITQALADRFAQNIAAHPADWHMLQPQWLADLSESRRAQLRSR</sequence>
<accession>P9WMB5</accession>
<accession>L0TCW4</accession>
<accession>O06203</accession>
<accession>Q7D6W7</accession>
<name>ACYLT_MYCTU</name>
<evidence type="ECO:0000250" key="1">
    <source>
        <dbReference type="UniProtKB" id="A0QWG5"/>
    </source>
</evidence>
<evidence type="ECO:0000269" key="2">
    <source>
    </source>
</evidence>
<evidence type="ECO:0000269" key="3">
    <source>
    </source>
</evidence>
<evidence type="ECO:0000303" key="4">
    <source>
    </source>
</evidence>
<evidence type="ECO:0000305" key="5"/>
<reference key="1">
    <citation type="journal article" date="1998" name="Nature">
        <title>Deciphering the biology of Mycobacterium tuberculosis from the complete genome sequence.</title>
        <authorList>
            <person name="Cole S.T."/>
            <person name="Brosch R."/>
            <person name="Parkhill J."/>
            <person name="Garnier T."/>
            <person name="Churcher C.M."/>
            <person name="Harris D.E."/>
            <person name="Gordon S.V."/>
            <person name="Eiglmeier K."/>
            <person name="Gas S."/>
            <person name="Barry C.E. III"/>
            <person name="Tekaia F."/>
            <person name="Badcock K."/>
            <person name="Basham D."/>
            <person name="Brown D."/>
            <person name="Chillingworth T."/>
            <person name="Connor R."/>
            <person name="Davies R.M."/>
            <person name="Devlin K."/>
            <person name="Feltwell T."/>
            <person name="Gentles S."/>
            <person name="Hamlin N."/>
            <person name="Holroyd S."/>
            <person name="Hornsby T."/>
            <person name="Jagels K."/>
            <person name="Krogh A."/>
            <person name="McLean J."/>
            <person name="Moule S."/>
            <person name="Murphy L.D."/>
            <person name="Oliver S."/>
            <person name="Osborne J."/>
            <person name="Quail M.A."/>
            <person name="Rajandream M.A."/>
            <person name="Rogers J."/>
            <person name="Rutter S."/>
            <person name="Seeger K."/>
            <person name="Skelton S."/>
            <person name="Squares S."/>
            <person name="Squares R."/>
            <person name="Sulston J.E."/>
            <person name="Taylor K."/>
            <person name="Whitehead S."/>
            <person name="Barrell B.G."/>
        </authorList>
    </citation>
    <scope>NUCLEOTIDE SEQUENCE [LARGE SCALE GENOMIC DNA]</scope>
    <source>
        <strain>ATCC 25618 / H37Rv</strain>
    </source>
</reference>
<reference key="2">
    <citation type="journal article" date="2002" name="Microbiology">
        <title>Re-annotation of the genome sequence of Mycobacterium tuberculosis H37Rv.</title>
        <authorList>
            <person name="Camus J.-C."/>
            <person name="Pryor M.J."/>
            <person name="Medigue C."/>
            <person name="Cole S.T."/>
        </authorList>
    </citation>
    <scope>SEQUENCE REVISION</scope>
    <source>
        <strain>ATCC 25618 / H37Rv</strain>
    </source>
</reference>
<reference key="3">
    <citation type="journal article" date="2003" name="J. Biol. Chem.">
        <title>Identification of the required acyltransferase step in the biosynthesis of the phosphatidylinositol mannosides of mycobacterium species.</title>
        <authorList>
            <person name="Kordulakova J."/>
            <person name="Gilleron M."/>
            <person name="Puzo G."/>
            <person name="Brennan P.J."/>
            <person name="Gicquel B."/>
            <person name="Mikusova K."/>
            <person name="Jackson M."/>
        </authorList>
    </citation>
    <scope>FUNCTION AS AN ACYLTRANSFERASE</scope>
    <scope>SUBCELLULAR LOCATION</scope>
    <scope>PATHWAY</scope>
</reference>
<reference key="4">
    <citation type="journal article" date="2011" name="Mol. Cell. Proteomics">
        <title>Proteogenomic analysis of Mycobacterium tuberculosis by high resolution mass spectrometry.</title>
        <authorList>
            <person name="Kelkar D.S."/>
            <person name="Kumar D."/>
            <person name="Kumar P."/>
            <person name="Balakrishnan L."/>
            <person name="Muthusamy B."/>
            <person name="Yadav A.K."/>
            <person name="Shrivastava P."/>
            <person name="Marimuthu A."/>
            <person name="Anand S."/>
            <person name="Sundaram H."/>
            <person name="Kingsbury R."/>
            <person name="Harsha H.C."/>
            <person name="Nair B."/>
            <person name="Prasad T.S."/>
            <person name="Chauhan D.S."/>
            <person name="Katoch K."/>
            <person name="Katoch V.M."/>
            <person name="Kumar P."/>
            <person name="Chaerkady R."/>
            <person name="Ramachandran S."/>
            <person name="Dash D."/>
            <person name="Pandey A."/>
        </authorList>
    </citation>
    <scope>IDENTIFICATION BY MASS SPECTROMETRY [LARGE SCALE ANALYSIS]</scope>
    <source>
        <strain>ATCC 25618 / H37Rv</strain>
    </source>
</reference>
<reference key="5">
    <citation type="journal article" date="2021" name="J. Bacteriol.">
        <title>The phosphatidyl-myo-inositol dimannoside acyltransferase PatA is essential for Mycobacterium tuberculosis growth in vitro and in vivo.</title>
        <authorList>
            <person name="Boldrin F."/>
            <person name="Anso I."/>
            <person name="Alebouyeh S."/>
            <person name="Sevilla I.A."/>
            <person name="Geijo M."/>
            <person name="Garrido J.M."/>
            <person name="Marina A."/>
            <person name="Mazzabo L.C."/>
            <person name="Segafreddo G."/>
            <person name="Guerin M.E."/>
            <person name="Manganelli R."/>
            <person name="Prados-Rosales R."/>
        </authorList>
    </citation>
    <scope>FUNCTION</scope>
    <scope>DISRUPTION PHENOTYPE</scope>
    <source>
        <strain>H37Rv</strain>
    </source>
</reference>
<comment type="function">
    <text evidence="2 3">Catalyzes the transfer of a palmitoyl moiety from palmitoyl-CoA to the 6-position of the mannose ring linked to the 2-position of myo-inositol in phosphatidyl-myo-inositol monomannoside (PIM1) or dimannoside (PIM2) (PubMed:12851411). Essential for growth and survival in axenic cultures and during macrophage infection and in a mouse model of infection (PubMed:33468587).</text>
</comment>
<comment type="catalytic activity">
    <reaction evidence="1">
        <text>a 2,6-O-bis(alpha-D-mannopyranosyl)-1-phosphatidyl-1D-myo-inositol + an acyl-CoA = a 2-O-(alpha-D-mannosyl)-6-O-(6-O-acyl-alpha-D-mannosyl)-1-phosphatidyl-1D-myo-inositol + CoA</text>
        <dbReference type="Rhea" id="RHEA:52436"/>
        <dbReference type="ChEBI" id="CHEBI:57287"/>
        <dbReference type="ChEBI" id="CHEBI:58342"/>
        <dbReference type="ChEBI" id="CHEBI:136624"/>
        <dbReference type="ChEBI" id="CHEBI:136625"/>
        <dbReference type="EC" id="2.3.1.265"/>
    </reaction>
</comment>
<comment type="catalytic activity">
    <reaction evidence="1">
        <text>a 1,2-diacyl-sn-glycero-3-phospho-[alpha-D-mannopyranosyl-(1&lt;-&gt;6)-D-myo-inositol] + an acyl-CoA = a 1,2-diacyl-sn-glycero-3-phospho-[alpha-D-6-acyl-mannopyranosyl-(1&lt;-&gt;6)-D-myo-inositol] + CoA</text>
        <dbReference type="Rhea" id="RHEA:47412"/>
        <dbReference type="ChEBI" id="CHEBI:57287"/>
        <dbReference type="ChEBI" id="CHEBI:58342"/>
        <dbReference type="ChEBI" id="CHEBI:87673"/>
        <dbReference type="ChEBI" id="CHEBI:88053"/>
        <dbReference type="EC" id="2.3.1.265"/>
    </reaction>
</comment>
<comment type="pathway">
    <text evidence="2">Phospholipid metabolism; phosphatidylinositol metabolism.</text>
</comment>
<comment type="subcellular location">
    <subcellularLocation>
        <location evidence="2">Cell inner membrane</location>
        <topology evidence="1">Peripheral membrane protein</topology>
        <orientation evidence="1">Cytoplasmic side</orientation>
    </subcellularLocation>
    <text evidence="1">Permanently associated with the membrane.</text>
</comment>
<comment type="disruption phenotype">
    <text evidence="3">Essential, gene silencing is bactericidal (PubMed:33468587). Depletion of PatA causes a block in the biosynthesis of PIMs, resulting in severe changes in the composition of the mycobacterial cell wall membrane, which correlates with the loss of viability (PubMed:33468587).</text>
</comment>
<comment type="similarity">
    <text evidence="5">Belongs to the LpxL/LpxM/LpxP family.</text>
</comment>
<feature type="chain" id="PRO_0000393105" description="Phosphatidylinositol mannoside acyltransferase">
    <location>
        <begin position="1"/>
        <end position="316"/>
    </location>
</feature>
<feature type="active site" description="Proton acceptor" evidence="1">
    <location>
        <position position="137"/>
    </location>
</feature>
<feature type="active site" evidence="1">
    <location>
        <position position="211"/>
    </location>
</feature>
<feature type="binding site" evidence="1">
    <location>
        <position position="137"/>
    </location>
    <ligand>
        <name>hexadecanoyl-CoA</name>
        <dbReference type="ChEBI" id="CHEBI:57379"/>
    </ligand>
</feature>
<feature type="binding site" evidence="1">
    <location>
        <position position="175"/>
    </location>
    <ligand>
        <name>hexadecanoyl-CoA</name>
        <dbReference type="ChEBI" id="CHEBI:57379"/>
    </ligand>
</feature>
<feature type="binding site" evidence="1">
    <location>
        <position position="240"/>
    </location>
    <ligand>
        <name>hexadecanoyl-CoA</name>
        <dbReference type="ChEBI" id="CHEBI:57379"/>
    </ligand>
</feature>
<gene>
    <name evidence="4" type="primary">patA</name>
    <name type="ordered locus">Rv2611c</name>
</gene>
<protein>
    <recommendedName>
        <fullName>Phosphatidylinositol mannoside acyltransferase</fullName>
        <shortName>PIM acyltransferase</shortName>
        <ecNumber evidence="1">2.3.1.265</ecNumber>
    </recommendedName>
</protein>
<dbReference type="EC" id="2.3.1.265" evidence="1"/>
<dbReference type="EMBL" id="AL123456">
    <property type="protein sequence ID" value="CCP45408.1"/>
    <property type="molecule type" value="Genomic_DNA"/>
</dbReference>
<dbReference type="PIR" id="B70571">
    <property type="entry name" value="B70571"/>
</dbReference>
<dbReference type="RefSeq" id="NP_217127.1">
    <property type="nucleotide sequence ID" value="NC_000962.3"/>
</dbReference>
<dbReference type="RefSeq" id="WP_003917024.1">
    <property type="nucleotide sequence ID" value="NZ_NVQJ01000023.1"/>
</dbReference>
<dbReference type="SMR" id="P9WMB5"/>
<dbReference type="FunCoup" id="P9WMB5">
    <property type="interactions" value="12"/>
</dbReference>
<dbReference type="STRING" id="83332.Rv2611c"/>
<dbReference type="SwissLipids" id="SLP:000001362"/>
<dbReference type="PaxDb" id="83332-Rv2611c"/>
<dbReference type="DNASU" id="888618"/>
<dbReference type="GeneID" id="888618"/>
<dbReference type="KEGG" id="mtu:Rv2611c"/>
<dbReference type="KEGG" id="mtv:RVBD_2611c"/>
<dbReference type="TubercuList" id="Rv2611c"/>
<dbReference type="eggNOG" id="COG1560">
    <property type="taxonomic scope" value="Bacteria"/>
</dbReference>
<dbReference type="InParanoid" id="P9WMB5"/>
<dbReference type="OrthoDB" id="9803456at2"/>
<dbReference type="PhylomeDB" id="P9WMB5"/>
<dbReference type="BioCyc" id="MetaCyc:G185E-6854-MONOMER"/>
<dbReference type="BRENDA" id="2.3.1.265">
    <property type="organism ID" value="3445"/>
</dbReference>
<dbReference type="UniPathway" id="UPA00949"/>
<dbReference type="Proteomes" id="UP000001584">
    <property type="component" value="Chromosome"/>
</dbReference>
<dbReference type="GO" id="GO:0016020">
    <property type="term" value="C:membrane"/>
    <property type="evidence" value="ECO:0000314"/>
    <property type="project" value="UniProtKB"/>
</dbReference>
<dbReference type="GO" id="GO:0005886">
    <property type="term" value="C:plasma membrane"/>
    <property type="evidence" value="ECO:0007669"/>
    <property type="project" value="UniProtKB-SubCell"/>
</dbReference>
<dbReference type="GO" id="GO:0016746">
    <property type="term" value="F:acyltransferase activity"/>
    <property type="evidence" value="ECO:0000316"/>
    <property type="project" value="UniProtKB"/>
</dbReference>
<dbReference type="GO" id="GO:0009247">
    <property type="term" value="P:glycolipid biosynthetic process"/>
    <property type="evidence" value="ECO:0000316"/>
    <property type="project" value="UniProtKB"/>
</dbReference>
<dbReference type="GO" id="GO:0046488">
    <property type="term" value="P:phosphatidylinositol metabolic process"/>
    <property type="evidence" value="ECO:0007669"/>
    <property type="project" value="UniProtKB-UniPathway"/>
</dbReference>
<dbReference type="GO" id="GO:0008654">
    <property type="term" value="P:phospholipid biosynthetic process"/>
    <property type="evidence" value="ECO:0007669"/>
    <property type="project" value="UniProtKB-KW"/>
</dbReference>
<dbReference type="CDD" id="cd07984">
    <property type="entry name" value="LPLAT_LABLAT-like"/>
    <property type="match status" value="1"/>
</dbReference>
<dbReference type="InterPro" id="IPR004960">
    <property type="entry name" value="LipA_acyltrans"/>
</dbReference>
<dbReference type="NCBIfam" id="NF005919">
    <property type="entry name" value="PRK07920.1"/>
    <property type="match status" value="1"/>
</dbReference>
<dbReference type="PANTHER" id="PTHR30606">
    <property type="entry name" value="LIPID A BIOSYNTHESIS LAUROYL ACYLTRANSFERASE"/>
    <property type="match status" value="1"/>
</dbReference>
<dbReference type="PANTHER" id="PTHR30606:SF10">
    <property type="entry name" value="PHOSPHATIDYLINOSITOL MANNOSIDE ACYLTRANSFERASE"/>
    <property type="match status" value="1"/>
</dbReference>
<dbReference type="Pfam" id="PF03279">
    <property type="entry name" value="Lip_A_acyltrans"/>
    <property type="match status" value="1"/>
</dbReference>